<accession>Q1KXX7</accession>
<proteinExistence type="inferred from homology"/>
<name>RR16_HELAN</name>
<comment type="subcellular location">
    <subcellularLocation>
        <location>Plastid</location>
        <location>Chloroplast</location>
    </subcellularLocation>
</comment>
<comment type="similarity">
    <text evidence="1">Belongs to the bacterial ribosomal protein bS16 family.</text>
</comment>
<gene>
    <name evidence="1" type="primary">rps16</name>
</gene>
<evidence type="ECO:0000255" key="1">
    <source>
        <dbReference type="HAMAP-Rule" id="MF_00385"/>
    </source>
</evidence>
<evidence type="ECO:0000305" key="2"/>
<reference key="1">
    <citation type="submission" date="2006-01" db="EMBL/GenBank/DDBJ databases">
        <title>A comparison of the first two published chloroplast genomes in Asteraceae: Lactuca and Helianthus.</title>
        <authorList>
            <person name="Timme R.E."/>
            <person name="Kuehl J.V."/>
            <person name="Boore J.L."/>
            <person name="Jansen R.K."/>
        </authorList>
    </citation>
    <scope>NUCLEOTIDE SEQUENCE [LARGE SCALE GENOMIC DNA]</scope>
    <source>
        <strain>cv. HA383</strain>
    </source>
</reference>
<protein>
    <recommendedName>
        <fullName evidence="1">Small ribosomal subunit protein bS16c</fullName>
    </recommendedName>
    <alternativeName>
        <fullName evidence="2">30S ribosomal protein S16, chloroplastic</fullName>
    </alternativeName>
</protein>
<organism>
    <name type="scientific">Helianthus annuus</name>
    <name type="common">Common sunflower</name>
    <dbReference type="NCBI Taxonomy" id="4232"/>
    <lineage>
        <taxon>Eukaryota</taxon>
        <taxon>Viridiplantae</taxon>
        <taxon>Streptophyta</taxon>
        <taxon>Embryophyta</taxon>
        <taxon>Tracheophyta</taxon>
        <taxon>Spermatophyta</taxon>
        <taxon>Magnoliopsida</taxon>
        <taxon>eudicotyledons</taxon>
        <taxon>Gunneridae</taxon>
        <taxon>Pentapetalae</taxon>
        <taxon>asterids</taxon>
        <taxon>campanulids</taxon>
        <taxon>Asterales</taxon>
        <taxon>Asteraceae</taxon>
        <taxon>Asteroideae</taxon>
        <taxon>Heliantheae alliance</taxon>
        <taxon>Heliantheae</taxon>
        <taxon>Helianthus</taxon>
    </lineage>
</organism>
<sequence>MVKLRLKRCGRKQRAVYRIVAIDVRSRREGRDLRKVGFYDPIKNQTYLNVPAILYFLEKGAQPTGTVQDILKKAEVFKELGPNQTKFN</sequence>
<feature type="chain" id="PRO_0000276949" description="Small ribosomal subunit protein bS16c">
    <location>
        <begin position="1"/>
        <end position="88"/>
    </location>
</feature>
<keyword id="KW-0150">Chloroplast</keyword>
<keyword id="KW-0934">Plastid</keyword>
<keyword id="KW-0687">Ribonucleoprotein</keyword>
<keyword id="KW-0689">Ribosomal protein</keyword>
<dbReference type="EMBL" id="DQ383815">
    <property type="protein sequence ID" value="ABD47128.2"/>
    <property type="molecule type" value="Genomic_DNA"/>
</dbReference>
<dbReference type="RefSeq" id="YP_588099.2">
    <property type="nucleotide sequence ID" value="NC_007977.1"/>
</dbReference>
<dbReference type="SMR" id="Q1KXX7"/>
<dbReference type="GeneID" id="4055640"/>
<dbReference type="KEGG" id="han:4055640"/>
<dbReference type="OrthoDB" id="407221at2759"/>
<dbReference type="GO" id="GO:0009507">
    <property type="term" value="C:chloroplast"/>
    <property type="evidence" value="ECO:0007669"/>
    <property type="project" value="UniProtKB-SubCell"/>
</dbReference>
<dbReference type="GO" id="GO:1990904">
    <property type="term" value="C:ribonucleoprotein complex"/>
    <property type="evidence" value="ECO:0007669"/>
    <property type="project" value="UniProtKB-KW"/>
</dbReference>
<dbReference type="GO" id="GO:0005840">
    <property type="term" value="C:ribosome"/>
    <property type="evidence" value="ECO:0007669"/>
    <property type="project" value="UniProtKB-KW"/>
</dbReference>
<dbReference type="GO" id="GO:0003735">
    <property type="term" value="F:structural constituent of ribosome"/>
    <property type="evidence" value="ECO:0007669"/>
    <property type="project" value="InterPro"/>
</dbReference>
<dbReference type="GO" id="GO:0006412">
    <property type="term" value="P:translation"/>
    <property type="evidence" value="ECO:0007669"/>
    <property type="project" value="UniProtKB-UniRule"/>
</dbReference>
<dbReference type="FunFam" id="3.30.1320.10:FF:000003">
    <property type="entry name" value="30S ribosomal protein S16, chloroplastic"/>
    <property type="match status" value="1"/>
</dbReference>
<dbReference type="Gene3D" id="3.30.1320.10">
    <property type="match status" value="1"/>
</dbReference>
<dbReference type="HAMAP" id="MF_00385">
    <property type="entry name" value="Ribosomal_bS16"/>
    <property type="match status" value="1"/>
</dbReference>
<dbReference type="InterPro" id="IPR000307">
    <property type="entry name" value="Ribosomal_bS16"/>
</dbReference>
<dbReference type="InterPro" id="IPR020592">
    <property type="entry name" value="Ribosomal_bS16_CS"/>
</dbReference>
<dbReference type="InterPro" id="IPR023803">
    <property type="entry name" value="Ribosomal_bS16_dom_sf"/>
</dbReference>
<dbReference type="NCBIfam" id="TIGR00002">
    <property type="entry name" value="S16"/>
    <property type="match status" value="1"/>
</dbReference>
<dbReference type="PANTHER" id="PTHR12919">
    <property type="entry name" value="30S RIBOSOMAL PROTEIN S16"/>
    <property type="match status" value="1"/>
</dbReference>
<dbReference type="PANTHER" id="PTHR12919:SF20">
    <property type="entry name" value="SMALL RIBOSOMAL SUBUNIT PROTEIN BS16M"/>
    <property type="match status" value="1"/>
</dbReference>
<dbReference type="Pfam" id="PF00886">
    <property type="entry name" value="Ribosomal_S16"/>
    <property type="match status" value="1"/>
</dbReference>
<dbReference type="SUPFAM" id="SSF54565">
    <property type="entry name" value="Ribosomal protein S16"/>
    <property type="match status" value="1"/>
</dbReference>
<dbReference type="PROSITE" id="PS00732">
    <property type="entry name" value="RIBOSOMAL_S16"/>
    <property type="match status" value="1"/>
</dbReference>
<geneLocation type="chloroplast"/>